<gene>
    <name type="primary">ARAC9</name>
    <name type="synonym">ROP8</name>
    <name type="ordered locus">At2g44690</name>
    <name type="ORF">F16B22.18</name>
</gene>
<feature type="chain" id="PRO_0000198923" description="Rac-like GTP-binding protein ARAC9">
    <location>
        <begin position="1"/>
        <end position="206"/>
    </location>
</feature>
<feature type="propeptide" id="PRO_0000227586" description="Removed in mature form" evidence="2">
    <location>
        <begin position="207"/>
        <end position="209"/>
    </location>
</feature>
<feature type="short sequence motif" description="Effector region" evidence="2">
    <location>
        <begin position="47"/>
        <end position="55"/>
    </location>
</feature>
<feature type="binding site" evidence="1">
    <location>
        <begin position="25"/>
        <end position="32"/>
    </location>
    <ligand>
        <name>GTP</name>
        <dbReference type="ChEBI" id="CHEBI:37565"/>
    </ligand>
</feature>
<feature type="binding site" evidence="1">
    <location>
        <begin position="72"/>
        <end position="76"/>
    </location>
    <ligand>
        <name>GTP</name>
        <dbReference type="ChEBI" id="CHEBI:37565"/>
    </ligand>
</feature>
<feature type="binding site" evidence="1">
    <location>
        <begin position="130"/>
        <end position="133"/>
    </location>
    <ligand>
        <name>GTP</name>
        <dbReference type="ChEBI" id="CHEBI:37565"/>
    </ligand>
</feature>
<feature type="modified residue" description="Cysteine methyl ester" evidence="2">
    <location>
        <position position="206"/>
    </location>
</feature>
<feature type="lipid moiety-binding region" description="S-geranylgeranyl cysteine" evidence="2">
    <location>
        <position position="206"/>
    </location>
</feature>
<protein>
    <recommendedName>
        <fullName>Rac-like GTP-binding protein ARAC9</fullName>
    </recommendedName>
    <alternativeName>
        <fullName>GTPase protein ROP8</fullName>
    </alternativeName>
</protein>
<accession>Q9XGU0</accession>
<accession>O80508</accession>
<reference key="1">
    <citation type="journal article" date="2000" name="Genetics">
        <title>Genetic structure and evolution of RAC-GTPases in Arabidopsis thaliana.</title>
        <authorList>
            <person name="Winge P."/>
            <person name="Brembu T."/>
            <person name="Kristensen R."/>
            <person name="Bones A.M."/>
        </authorList>
    </citation>
    <scope>NUCLEOTIDE SEQUENCE [MRNA]</scope>
    <source>
        <strain>cv. Columbia</strain>
    </source>
</reference>
<reference key="2">
    <citation type="journal article" date="1999" name="Nature">
        <title>Sequence and analysis of chromosome 2 of the plant Arabidopsis thaliana.</title>
        <authorList>
            <person name="Lin X."/>
            <person name="Kaul S."/>
            <person name="Rounsley S.D."/>
            <person name="Shea T.P."/>
            <person name="Benito M.-I."/>
            <person name="Town C.D."/>
            <person name="Fujii C.Y."/>
            <person name="Mason T.M."/>
            <person name="Bowman C.L."/>
            <person name="Barnstead M.E."/>
            <person name="Feldblyum T.V."/>
            <person name="Buell C.R."/>
            <person name="Ketchum K.A."/>
            <person name="Lee J.J."/>
            <person name="Ronning C.M."/>
            <person name="Koo H.L."/>
            <person name="Moffat K.S."/>
            <person name="Cronin L.A."/>
            <person name="Shen M."/>
            <person name="Pai G."/>
            <person name="Van Aken S."/>
            <person name="Umayam L."/>
            <person name="Tallon L.J."/>
            <person name="Gill J.E."/>
            <person name="Adams M.D."/>
            <person name="Carrera A.J."/>
            <person name="Creasy T.H."/>
            <person name="Goodman H.M."/>
            <person name="Somerville C.R."/>
            <person name="Copenhaver G.P."/>
            <person name="Preuss D."/>
            <person name="Nierman W.C."/>
            <person name="White O."/>
            <person name="Eisen J.A."/>
            <person name="Salzberg S.L."/>
            <person name="Fraser C.M."/>
            <person name="Venter J.C."/>
        </authorList>
    </citation>
    <scope>NUCLEOTIDE SEQUENCE [LARGE SCALE GENOMIC DNA]</scope>
    <source>
        <strain>cv. Columbia</strain>
    </source>
</reference>
<reference key="3">
    <citation type="journal article" date="2017" name="Plant J.">
        <title>Araport11: a complete reannotation of the Arabidopsis thaliana reference genome.</title>
        <authorList>
            <person name="Cheng C.Y."/>
            <person name="Krishnakumar V."/>
            <person name="Chan A.P."/>
            <person name="Thibaud-Nissen F."/>
            <person name="Schobel S."/>
            <person name="Town C.D."/>
        </authorList>
    </citation>
    <scope>GENOME REANNOTATION</scope>
    <source>
        <strain>cv. Columbia</strain>
    </source>
</reference>
<reference key="4">
    <citation type="journal article" date="2007" name="Development">
        <title>The role of Arabidopsis SCAR genes in ARP2-ARP3-dependent cell morphogenesis.</title>
        <authorList>
            <person name="Uhrig J.F."/>
            <person name="Mutondo M."/>
            <person name="Zimmermann I."/>
            <person name="Deeks M.J."/>
            <person name="Machesky L.M."/>
            <person name="Thomas P."/>
            <person name="Uhrig S."/>
            <person name="Rambke C."/>
            <person name="Hussey P.J."/>
            <person name="Huelskamp M."/>
        </authorList>
    </citation>
    <scope>INTERACTION WITH SPK1</scope>
</reference>
<proteinExistence type="evidence at protein level"/>
<name>RAC9_ARATH</name>
<dbReference type="EMBL" id="AF156896">
    <property type="protein sequence ID" value="AAD42972.1"/>
    <property type="molecule type" value="mRNA"/>
</dbReference>
<dbReference type="EMBL" id="AC003672">
    <property type="protein sequence ID" value="AAC27471.2"/>
    <property type="molecule type" value="Genomic_DNA"/>
</dbReference>
<dbReference type="EMBL" id="CP002685">
    <property type="protein sequence ID" value="AEC10456.1"/>
    <property type="molecule type" value="Genomic_DNA"/>
</dbReference>
<dbReference type="PIR" id="T01596">
    <property type="entry name" value="T01596"/>
</dbReference>
<dbReference type="RefSeq" id="NP_566024.1">
    <property type="nucleotide sequence ID" value="NM_130033.3"/>
</dbReference>
<dbReference type="SMR" id="Q9XGU0"/>
<dbReference type="BioGRID" id="4413">
    <property type="interactions" value="7"/>
</dbReference>
<dbReference type="FunCoup" id="Q9XGU0">
    <property type="interactions" value="2567"/>
</dbReference>
<dbReference type="IntAct" id="Q9XGU0">
    <property type="interactions" value="6"/>
</dbReference>
<dbReference type="STRING" id="3702.Q9XGU0"/>
<dbReference type="PaxDb" id="3702-AT2G44690.1"/>
<dbReference type="ProteomicsDB" id="236417"/>
<dbReference type="EnsemblPlants" id="AT2G44690.1">
    <property type="protein sequence ID" value="AT2G44690.1"/>
    <property type="gene ID" value="AT2G44690"/>
</dbReference>
<dbReference type="GeneID" id="819077"/>
<dbReference type="Gramene" id="AT2G44690.1">
    <property type="protein sequence ID" value="AT2G44690.1"/>
    <property type="gene ID" value="AT2G44690"/>
</dbReference>
<dbReference type="KEGG" id="ath:AT2G44690"/>
<dbReference type="Araport" id="AT2G44690"/>
<dbReference type="TAIR" id="AT2G44690">
    <property type="gene designation" value="ARAC9"/>
</dbReference>
<dbReference type="eggNOG" id="KOG0393">
    <property type="taxonomic scope" value="Eukaryota"/>
</dbReference>
<dbReference type="HOGENOM" id="CLU_041217_21_3_1"/>
<dbReference type="InParanoid" id="Q9XGU0"/>
<dbReference type="OMA" id="GACTIFP"/>
<dbReference type="PhylomeDB" id="Q9XGU0"/>
<dbReference type="PRO" id="PR:Q9XGU0"/>
<dbReference type="Proteomes" id="UP000006548">
    <property type="component" value="Chromosome 2"/>
</dbReference>
<dbReference type="ExpressionAtlas" id="Q9XGU0">
    <property type="expression patterns" value="baseline and differential"/>
</dbReference>
<dbReference type="GO" id="GO:0000421">
    <property type="term" value="C:autophagosome membrane"/>
    <property type="evidence" value="ECO:0000314"/>
    <property type="project" value="TAIR"/>
</dbReference>
<dbReference type="GO" id="GO:0005525">
    <property type="term" value="F:GTP binding"/>
    <property type="evidence" value="ECO:0007669"/>
    <property type="project" value="UniProtKB-KW"/>
</dbReference>
<dbReference type="GO" id="GO:0003924">
    <property type="term" value="F:GTPase activity"/>
    <property type="evidence" value="ECO:0007669"/>
    <property type="project" value="InterPro"/>
</dbReference>
<dbReference type="GO" id="GO:0006914">
    <property type="term" value="P:autophagy"/>
    <property type="evidence" value="ECO:0000314"/>
    <property type="project" value="TAIR"/>
</dbReference>
<dbReference type="GO" id="GO:0007264">
    <property type="term" value="P:small GTPase-mediated signal transduction"/>
    <property type="evidence" value="ECO:0007669"/>
    <property type="project" value="InterPro"/>
</dbReference>
<dbReference type="CDD" id="cd04133">
    <property type="entry name" value="Rop_like"/>
    <property type="match status" value="1"/>
</dbReference>
<dbReference type="FunFam" id="3.40.50.300:FF:000118">
    <property type="entry name" value="Rho-related GTP-binding protein RhoG"/>
    <property type="match status" value="1"/>
</dbReference>
<dbReference type="Gene3D" id="3.40.50.300">
    <property type="entry name" value="P-loop containing nucleotide triphosphate hydrolases"/>
    <property type="match status" value="1"/>
</dbReference>
<dbReference type="InterPro" id="IPR027417">
    <property type="entry name" value="P-loop_NTPase"/>
</dbReference>
<dbReference type="InterPro" id="IPR005225">
    <property type="entry name" value="Small_GTP-bd"/>
</dbReference>
<dbReference type="InterPro" id="IPR001806">
    <property type="entry name" value="Small_GTPase"/>
</dbReference>
<dbReference type="InterPro" id="IPR003578">
    <property type="entry name" value="Small_GTPase_Rho"/>
</dbReference>
<dbReference type="NCBIfam" id="TIGR00231">
    <property type="entry name" value="small_GTP"/>
    <property type="match status" value="1"/>
</dbReference>
<dbReference type="PANTHER" id="PTHR24072">
    <property type="entry name" value="RHO FAMILY GTPASE"/>
    <property type="match status" value="1"/>
</dbReference>
<dbReference type="Pfam" id="PF00071">
    <property type="entry name" value="Ras"/>
    <property type="match status" value="1"/>
</dbReference>
<dbReference type="PRINTS" id="PR00449">
    <property type="entry name" value="RASTRNSFRMNG"/>
</dbReference>
<dbReference type="SMART" id="SM00175">
    <property type="entry name" value="RAB"/>
    <property type="match status" value="1"/>
</dbReference>
<dbReference type="SMART" id="SM00173">
    <property type="entry name" value="RAS"/>
    <property type="match status" value="1"/>
</dbReference>
<dbReference type="SMART" id="SM00174">
    <property type="entry name" value="RHO"/>
    <property type="match status" value="1"/>
</dbReference>
<dbReference type="SUPFAM" id="SSF52540">
    <property type="entry name" value="P-loop containing nucleoside triphosphate hydrolases"/>
    <property type="match status" value="1"/>
</dbReference>
<dbReference type="PROSITE" id="PS51420">
    <property type="entry name" value="RHO"/>
    <property type="match status" value="1"/>
</dbReference>
<evidence type="ECO:0000250" key="1"/>
<evidence type="ECO:0000255" key="2"/>
<evidence type="ECO:0000269" key="3">
    <source>
    </source>
</evidence>
<evidence type="ECO:0000305" key="4"/>
<keyword id="KW-0963">Cytoplasm</keyword>
<keyword id="KW-0342">GTP-binding</keyword>
<keyword id="KW-0449">Lipoprotein</keyword>
<keyword id="KW-0472">Membrane</keyword>
<keyword id="KW-0488">Methylation</keyword>
<keyword id="KW-0547">Nucleotide-binding</keyword>
<keyword id="KW-0636">Prenylation</keyword>
<keyword id="KW-1185">Reference proteome</keyword>
<comment type="function">
    <text evidence="1">Inactive GDP-bound Rho GTPases reside in the cytosol, are found in a complex with Rho GDP-dissociation inhibitors (Rho GDIs), and are released from the GDI protein in order to translocate to membranes upon activation.</text>
</comment>
<comment type="subunit">
    <text evidence="3">Interacts with SPK1.</text>
</comment>
<comment type="subcellular location">
    <subcellularLocation>
        <location evidence="1">Cytoplasm</location>
    </subcellularLocation>
    <subcellularLocation>
        <location evidence="1">Membrane</location>
        <topology evidence="1">Peripheral membrane protein</topology>
    </subcellularLocation>
    <text>Associated with the membrane when activated.</text>
</comment>
<comment type="similarity">
    <text evidence="4">Belongs to the small GTPase superfamily. Rho family.</text>
</comment>
<sequence>MSASMAATSTSSATATTFIKCVTVGDGAVGKTCLLISYTSNTFPTDYVPTVFDNFNANVLVDGKTVNLGLWDTAGQEDYNRVRPLSYRGADVFILAFSLISRPSFENIAKKWVPELRHYAPTVPIVLVGTKSDLRDNMQFPKNYPGACTIFPEQGQELRKEIGALAYIECSSKAQMNVKAVFDEAIKVVLHPPSKTKKRKRKIGLCHVL</sequence>
<organism>
    <name type="scientific">Arabidopsis thaliana</name>
    <name type="common">Mouse-ear cress</name>
    <dbReference type="NCBI Taxonomy" id="3702"/>
    <lineage>
        <taxon>Eukaryota</taxon>
        <taxon>Viridiplantae</taxon>
        <taxon>Streptophyta</taxon>
        <taxon>Embryophyta</taxon>
        <taxon>Tracheophyta</taxon>
        <taxon>Spermatophyta</taxon>
        <taxon>Magnoliopsida</taxon>
        <taxon>eudicotyledons</taxon>
        <taxon>Gunneridae</taxon>
        <taxon>Pentapetalae</taxon>
        <taxon>rosids</taxon>
        <taxon>malvids</taxon>
        <taxon>Brassicales</taxon>
        <taxon>Brassicaceae</taxon>
        <taxon>Camelineae</taxon>
        <taxon>Arabidopsis</taxon>
    </lineage>
</organism>